<organism>
    <name type="scientific">Streptococcus suis (strain 98HAH33)</name>
    <dbReference type="NCBI Taxonomy" id="391296"/>
    <lineage>
        <taxon>Bacteria</taxon>
        <taxon>Bacillati</taxon>
        <taxon>Bacillota</taxon>
        <taxon>Bacilli</taxon>
        <taxon>Lactobacillales</taxon>
        <taxon>Streptococcaceae</taxon>
        <taxon>Streptococcus</taxon>
    </lineage>
</organism>
<evidence type="ECO:0000255" key="1">
    <source>
        <dbReference type="HAMAP-Rule" id="MF_00530"/>
    </source>
</evidence>
<gene>
    <name evidence="1" type="primary">atpC</name>
    <name type="ordered locus">SSU98_1187</name>
</gene>
<keyword id="KW-0066">ATP synthesis</keyword>
<keyword id="KW-1003">Cell membrane</keyword>
<keyword id="KW-0139">CF(1)</keyword>
<keyword id="KW-0375">Hydrogen ion transport</keyword>
<keyword id="KW-0406">Ion transport</keyword>
<keyword id="KW-0472">Membrane</keyword>
<keyword id="KW-0813">Transport</keyword>
<sequence length="138" mass="15589">MGQMTVQIVTPDGIKYDHHAAFVLVKTVDGEMGVYSGHEELIAVLEIGEMKVRRVDDENHVDWIAVNGGIIEVNKDIITVISDSAERERDIDISRAERAKLRAERELEEAQTARNIDMEMRATVALQRAINRIRVGKH</sequence>
<comment type="function">
    <text evidence="1">Produces ATP from ADP in the presence of a proton gradient across the membrane.</text>
</comment>
<comment type="subunit">
    <text evidence="1">F-type ATPases have 2 components, CF(1) - the catalytic core - and CF(0) - the membrane proton channel. CF(1) has five subunits: alpha(3), beta(3), gamma(1), delta(1), epsilon(1). CF(0) has three main subunits: a, b and c.</text>
</comment>
<comment type="subcellular location">
    <subcellularLocation>
        <location evidence="1">Cell membrane</location>
        <topology evidence="1">Peripheral membrane protein</topology>
    </subcellularLocation>
</comment>
<comment type="similarity">
    <text evidence="1">Belongs to the ATPase epsilon chain family.</text>
</comment>
<name>ATPE_STRS2</name>
<proteinExistence type="inferred from homology"/>
<feature type="chain" id="PRO_1000056542" description="ATP synthase epsilon chain">
    <location>
        <begin position="1"/>
        <end position="138"/>
    </location>
</feature>
<accession>A4W1V6</accession>
<dbReference type="EMBL" id="CP000408">
    <property type="protein sequence ID" value="ABP92345.1"/>
    <property type="molecule type" value="Genomic_DNA"/>
</dbReference>
<dbReference type="SMR" id="A4W1V6"/>
<dbReference type="KEGG" id="ssv:SSU98_1187"/>
<dbReference type="HOGENOM" id="CLU_084338_1_0_9"/>
<dbReference type="GO" id="GO:0005886">
    <property type="term" value="C:plasma membrane"/>
    <property type="evidence" value="ECO:0007669"/>
    <property type="project" value="UniProtKB-SubCell"/>
</dbReference>
<dbReference type="GO" id="GO:0045259">
    <property type="term" value="C:proton-transporting ATP synthase complex"/>
    <property type="evidence" value="ECO:0007669"/>
    <property type="project" value="UniProtKB-KW"/>
</dbReference>
<dbReference type="GO" id="GO:0005524">
    <property type="term" value="F:ATP binding"/>
    <property type="evidence" value="ECO:0007669"/>
    <property type="project" value="UniProtKB-UniRule"/>
</dbReference>
<dbReference type="GO" id="GO:0046933">
    <property type="term" value="F:proton-transporting ATP synthase activity, rotational mechanism"/>
    <property type="evidence" value="ECO:0007669"/>
    <property type="project" value="UniProtKB-UniRule"/>
</dbReference>
<dbReference type="CDD" id="cd12152">
    <property type="entry name" value="F1-ATPase_delta"/>
    <property type="match status" value="1"/>
</dbReference>
<dbReference type="Gene3D" id="1.20.5.440">
    <property type="entry name" value="ATP synthase delta/epsilon subunit, C-terminal domain"/>
    <property type="match status" value="1"/>
</dbReference>
<dbReference type="Gene3D" id="2.60.15.10">
    <property type="entry name" value="F0F1 ATP synthase delta/epsilon subunit, N-terminal"/>
    <property type="match status" value="1"/>
</dbReference>
<dbReference type="HAMAP" id="MF_00530">
    <property type="entry name" value="ATP_synth_epsil_bac"/>
    <property type="match status" value="1"/>
</dbReference>
<dbReference type="InterPro" id="IPR001469">
    <property type="entry name" value="ATP_synth_F1_dsu/esu"/>
</dbReference>
<dbReference type="InterPro" id="IPR020546">
    <property type="entry name" value="ATP_synth_F1_dsu/esu_N"/>
</dbReference>
<dbReference type="InterPro" id="IPR020547">
    <property type="entry name" value="ATP_synth_F1_esu_C"/>
</dbReference>
<dbReference type="InterPro" id="IPR036771">
    <property type="entry name" value="ATPsynth_dsu/esu_N"/>
</dbReference>
<dbReference type="NCBIfam" id="TIGR01216">
    <property type="entry name" value="ATP_synt_epsi"/>
    <property type="match status" value="1"/>
</dbReference>
<dbReference type="NCBIfam" id="NF001846">
    <property type="entry name" value="PRK00571.1-3"/>
    <property type="match status" value="1"/>
</dbReference>
<dbReference type="PANTHER" id="PTHR13822">
    <property type="entry name" value="ATP SYNTHASE DELTA/EPSILON CHAIN"/>
    <property type="match status" value="1"/>
</dbReference>
<dbReference type="PANTHER" id="PTHR13822:SF10">
    <property type="entry name" value="ATP SYNTHASE EPSILON CHAIN, CHLOROPLASTIC"/>
    <property type="match status" value="1"/>
</dbReference>
<dbReference type="Pfam" id="PF00401">
    <property type="entry name" value="ATP-synt_DE"/>
    <property type="match status" value="1"/>
</dbReference>
<dbReference type="Pfam" id="PF02823">
    <property type="entry name" value="ATP-synt_DE_N"/>
    <property type="match status" value="1"/>
</dbReference>
<dbReference type="SUPFAM" id="SSF51344">
    <property type="entry name" value="Epsilon subunit of F1F0-ATP synthase N-terminal domain"/>
    <property type="match status" value="1"/>
</dbReference>
<reference key="1">
    <citation type="journal article" date="2007" name="PLoS ONE">
        <title>A glimpse of streptococcal toxic shock syndrome from comparative genomics of S. suis 2 Chinese isolates.</title>
        <authorList>
            <person name="Chen C."/>
            <person name="Tang J."/>
            <person name="Dong W."/>
            <person name="Wang C."/>
            <person name="Feng Y."/>
            <person name="Wang J."/>
            <person name="Zheng F."/>
            <person name="Pan X."/>
            <person name="Liu D."/>
            <person name="Li M."/>
            <person name="Song Y."/>
            <person name="Zhu X."/>
            <person name="Sun H."/>
            <person name="Feng T."/>
            <person name="Guo Z."/>
            <person name="Ju A."/>
            <person name="Ge J."/>
            <person name="Dong Y."/>
            <person name="Sun W."/>
            <person name="Jiang Y."/>
            <person name="Wang J."/>
            <person name="Yan J."/>
            <person name="Yang H."/>
            <person name="Wang X."/>
            <person name="Gao G.F."/>
            <person name="Yang R."/>
            <person name="Wang J."/>
            <person name="Yu J."/>
        </authorList>
    </citation>
    <scope>NUCLEOTIDE SEQUENCE [LARGE SCALE GENOMIC DNA]</scope>
    <source>
        <strain>98HAH33</strain>
    </source>
</reference>
<protein>
    <recommendedName>
        <fullName evidence="1">ATP synthase epsilon chain</fullName>
    </recommendedName>
    <alternativeName>
        <fullName evidence="1">ATP synthase F1 sector epsilon subunit</fullName>
    </alternativeName>
    <alternativeName>
        <fullName evidence="1">F-ATPase epsilon subunit</fullName>
    </alternativeName>
</protein>